<feature type="chain" id="PRO_1000184599" description="Flavin-dependent thymidylate synthase">
    <location>
        <begin position="1"/>
        <end position="250"/>
    </location>
</feature>
<feature type="domain" description="ThyX" evidence="2">
    <location>
        <begin position="7"/>
        <end position="233"/>
    </location>
</feature>
<feature type="short sequence motif" description="ThyX motif" evidence="1">
    <location>
        <begin position="95"/>
        <end position="105"/>
    </location>
</feature>
<feature type="active site" description="Involved in ionization of N3 of dUMP, leading to its activation" evidence="1">
    <location>
        <position position="199"/>
    </location>
</feature>
<feature type="binding site" evidence="1">
    <location>
        <position position="71"/>
    </location>
    <ligand>
        <name>FAD</name>
        <dbReference type="ChEBI" id="CHEBI:57692"/>
        <note>ligand shared between neighboring subunits</note>
    </ligand>
</feature>
<feature type="binding site" evidence="1">
    <location>
        <begin position="92"/>
        <end position="95"/>
    </location>
    <ligand>
        <name>dUMP</name>
        <dbReference type="ChEBI" id="CHEBI:246422"/>
        <note>ligand shared between dimeric partners</note>
    </ligand>
</feature>
<feature type="binding site" evidence="1">
    <location>
        <begin position="95"/>
        <end position="97"/>
    </location>
    <ligand>
        <name>FAD</name>
        <dbReference type="ChEBI" id="CHEBI:57692"/>
        <note>ligand shared between neighboring subunits</note>
    </ligand>
</feature>
<feature type="binding site" description="in other chain" evidence="1">
    <location>
        <begin position="103"/>
        <end position="107"/>
    </location>
    <ligand>
        <name>dUMP</name>
        <dbReference type="ChEBI" id="CHEBI:246422"/>
        <note>ligand shared between dimeric partners</note>
    </ligand>
</feature>
<feature type="binding site" evidence="1">
    <location>
        <position position="103"/>
    </location>
    <ligand>
        <name>FAD</name>
        <dbReference type="ChEBI" id="CHEBI:57692"/>
        <note>ligand shared between neighboring subunits</note>
    </ligand>
</feature>
<feature type="binding site" description="in other chain" evidence="1">
    <location>
        <position position="172"/>
    </location>
    <ligand>
        <name>dUMP</name>
        <dbReference type="ChEBI" id="CHEBI:246422"/>
        <note>ligand shared between dimeric partners</note>
    </ligand>
</feature>
<feature type="binding site" evidence="1">
    <location>
        <begin position="188"/>
        <end position="190"/>
    </location>
    <ligand>
        <name>FAD</name>
        <dbReference type="ChEBI" id="CHEBI:57692"/>
        <note>ligand shared between neighboring subunits</note>
    </ligand>
</feature>
<feature type="binding site" evidence="1">
    <location>
        <position position="194"/>
    </location>
    <ligand>
        <name>FAD</name>
        <dbReference type="ChEBI" id="CHEBI:57692"/>
        <note>ligand shared between neighboring subunits</note>
    </ligand>
</feature>
<feature type="binding site" evidence="1">
    <location>
        <position position="199"/>
    </location>
    <ligand>
        <name>dUMP</name>
        <dbReference type="ChEBI" id="CHEBI:246422"/>
        <note>ligand shared between dimeric partners</note>
    </ligand>
</feature>
<name>THYX_MYCTA</name>
<organism>
    <name type="scientific">Mycobacterium tuberculosis (strain ATCC 25177 / H37Ra)</name>
    <dbReference type="NCBI Taxonomy" id="419947"/>
    <lineage>
        <taxon>Bacteria</taxon>
        <taxon>Bacillati</taxon>
        <taxon>Actinomycetota</taxon>
        <taxon>Actinomycetes</taxon>
        <taxon>Mycobacteriales</taxon>
        <taxon>Mycobacteriaceae</taxon>
        <taxon>Mycobacterium</taxon>
        <taxon>Mycobacterium tuberculosis complex</taxon>
    </lineage>
</organism>
<sequence>MAETAPLRVQLIAKTDFLAPPDVPWTTDADGGPALVEFAGRACYQSWSKPNPKTATNAGYLRHIIDVGHFSVLEHASVSFYITGISRSCTHELIRHRHFSYSQLSQRYVPEKDSRVVVPPGMEDDADLRHILTEAADAARATYSELLAKLEAKFADQPNAILRRKQARQAARAVLPNATETRIVVTGNYRAWRHFIAMRASEHADVEIRRLAIECLRQLAAVAPAVFADFEVTTLADGTEVATSPLATEA</sequence>
<gene>
    <name evidence="1" type="primary">thyX</name>
    <name type="ordered locus">MRA_2779</name>
</gene>
<keyword id="KW-0274">FAD</keyword>
<keyword id="KW-0285">Flavoprotein</keyword>
<keyword id="KW-0489">Methyltransferase</keyword>
<keyword id="KW-0521">NADP</keyword>
<keyword id="KW-0545">Nucleotide biosynthesis</keyword>
<keyword id="KW-1185">Reference proteome</keyword>
<keyword id="KW-0808">Transferase</keyword>
<protein>
    <recommendedName>
        <fullName evidence="1">Flavin-dependent thymidylate synthase</fullName>
        <shortName evidence="1">FDTS</shortName>
        <ecNumber evidence="1">2.1.1.148</ecNumber>
    </recommendedName>
    <alternativeName>
        <fullName evidence="1">FAD-dependent thymidylate synthase</fullName>
    </alternativeName>
    <alternativeName>
        <fullName evidence="1">Thymidylate synthase ThyX</fullName>
        <shortName evidence="1">TS</shortName>
        <shortName evidence="1">TSase</shortName>
    </alternativeName>
</protein>
<reference key="1">
    <citation type="journal article" date="2008" name="PLoS ONE">
        <title>Genetic basis of virulence attenuation revealed by comparative genomic analysis of Mycobacterium tuberculosis strain H37Ra versus H37Rv.</title>
        <authorList>
            <person name="Zheng H."/>
            <person name="Lu L."/>
            <person name="Wang B."/>
            <person name="Pu S."/>
            <person name="Zhang X."/>
            <person name="Zhu G."/>
            <person name="Shi W."/>
            <person name="Zhang L."/>
            <person name="Wang H."/>
            <person name="Wang S."/>
            <person name="Zhao G."/>
            <person name="Zhang Y."/>
        </authorList>
    </citation>
    <scope>NUCLEOTIDE SEQUENCE [LARGE SCALE GENOMIC DNA]</scope>
    <source>
        <strain>ATCC 25177 / H37Ra</strain>
    </source>
</reference>
<comment type="function">
    <text evidence="1">Catalyzes the reductive methylation of 2'-deoxyuridine-5'-monophosphate (dUMP) to 2'-deoxythymidine-5'-monophosphate (dTMP) while utilizing 5,10-methylenetetrahydrofolate (mTHF) as the methyl donor, and NADPH and FADH(2) as the reductant.</text>
</comment>
<comment type="catalytic activity">
    <reaction evidence="1">
        <text>dUMP + (6R)-5,10-methylene-5,6,7,8-tetrahydrofolate + NADPH + H(+) = dTMP + (6S)-5,6,7,8-tetrahydrofolate + NADP(+)</text>
        <dbReference type="Rhea" id="RHEA:29043"/>
        <dbReference type="ChEBI" id="CHEBI:15378"/>
        <dbReference type="ChEBI" id="CHEBI:15636"/>
        <dbReference type="ChEBI" id="CHEBI:57453"/>
        <dbReference type="ChEBI" id="CHEBI:57783"/>
        <dbReference type="ChEBI" id="CHEBI:58349"/>
        <dbReference type="ChEBI" id="CHEBI:63528"/>
        <dbReference type="ChEBI" id="CHEBI:246422"/>
        <dbReference type="EC" id="2.1.1.148"/>
    </reaction>
</comment>
<comment type="cofactor">
    <cofactor evidence="1">
        <name>FAD</name>
        <dbReference type="ChEBI" id="CHEBI:57692"/>
    </cofactor>
    <text evidence="1">Binds 4 FAD per tetramer. Each FAD binding site is formed by three monomers.</text>
</comment>
<comment type="pathway">
    <text evidence="1">Pyrimidine metabolism; dTTP biosynthesis.</text>
</comment>
<comment type="subunit">
    <text evidence="1">Homotetramer.</text>
</comment>
<comment type="similarity">
    <text evidence="1">Belongs to the thymidylate synthase ThyX family.</text>
</comment>
<dbReference type="EC" id="2.1.1.148" evidence="1"/>
<dbReference type="EMBL" id="CP000611">
    <property type="protein sequence ID" value="ABQ74557.1"/>
    <property type="molecule type" value="Genomic_DNA"/>
</dbReference>
<dbReference type="RefSeq" id="WP_003899465.1">
    <property type="nucleotide sequence ID" value="NZ_CP016972.1"/>
</dbReference>
<dbReference type="SMR" id="A5U6A7"/>
<dbReference type="KEGG" id="mra:MRA_2779"/>
<dbReference type="eggNOG" id="COG1351">
    <property type="taxonomic scope" value="Bacteria"/>
</dbReference>
<dbReference type="HOGENOM" id="CLU_077585_1_0_11"/>
<dbReference type="UniPathway" id="UPA00575"/>
<dbReference type="Proteomes" id="UP000001988">
    <property type="component" value="Chromosome"/>
</dbReference>
<dbReference type="GO" id="GO:0050660">
    <property type="term" value="F:flavin adenine dinucleotide binding"/>
    <property type="evidence" value="ECO:0007669"/>
    <property type="project" value="InterPro"/>
</dbReference>
<dbReference type="GO" id="GO:0070402">
    <property type="term" value="F:NADPH binding"/>
    <property type="evidence" value="ECO:0007669"/>
    <property type="project" value="TreeGrafter"/>
</dbReference>
<dbReference type="GO" id="GO:0050797">
    <property type="term" value="F:thymidylate synthase (FAD) activity"/>
    <property type="evidence" value="ECO:0007669"/>
    <property type="project" value="UniProtKB-UniRule"/>
</dbReference>
<dbReference type="GO" id="GO:0004799">
    <property type="term" value="F:thymidylate synthase activity"/>
    <property type="evidence" value="ECO:0007669"/>
    <property type="project" value="TreeGrafter"/>
</dbReference>
<dbReference type="GO" id="GO:0006231">
    <property type="term" value="P:dTMP biosynthetic process"/>
    <property type="evidence" value="ECO:0007669"/>
    <property type="project" value="UniProtKB-UniRule"/>
</dbReference>
<dbReference type="GO" id="GO:0006235">
    <property type="term" value="P:dTTP biosynthetic process"/>
    <property type="evidence" value="ECO:0007669"/>
    <property type="project" value="UniProtKB-UniRule"/>
</dbReference>
<dbReference type="GO" id="GO:0032259">
    <property type="term" value="P:methylation"/>
    <property type="evidence" value="ECO:0007669"/>
    <property type="project" value="UniProtKB-KW"/>
</dbReference>
<dbReference type="CDD" id="cd20175">
    <property type="entry name" value="ThyX"/>
    <property type="match status" value="1"/>
</dbReference>
<dbReference type="Gene3D" id="3.30.1360.170">
    <property type="match status" value="1"/>
</dbReference>
<dbReference type="HAMAP" id="MF_01408">
    <property type="entry name" value="ThyX"/>
    <property type="match status" value="1"/>
</dbReference>
<dbReference type="InterPro" id="IPR003669">
    <property type="entry name" value="Thymidylate_synthase_ThyX"/>
</dbReference>
<dbReference type="InterPro" id="IPR036098">
    <property type="entry name" value="Thymidylate_synthase_ThyX_sf"/>
</dbReference>
<dbReference type="NCBIfam" id="TIGR02170">
    <property type="entry name" value="thyX"/>
    <property type="match status" value="1"/>
</dbReference>
<dbReference type="PANTHER" id="PTHR34934">
    <property type="entry name" value="FLAVIN-DEPENDENT THYMIDYLATE SYNTHASE"/>
    <property type="match status" value="1"/>
</dbReference>
<dbReference type="PANTHER" id="PTHR34934:SF1">
    <property type="entry name" value="FLAVIN-DEPENDENT THYMIDYLATE SYNTHASE"/>
    <property type="match status" value="1"/>
</dbReference>
<dbReference type="Pfam" id="PF02511">
    <property type="entry name" value="Thy1"/>
    <property type="match status" value="1"/>
</dbReference>
<dbReference type="SUPFAM" id="SSF69796">
    <property type="entry name" value="Thymidylate synthase-complementing protein Thy1"/>
    <property type="match status" value="1"/>
</dbReference>
<dbReference type="PROSITE" id="PS51331">
    <property type="entry name" value="THYX"/>
    <property type="match status" value="1"/>
</dbReference>
<accession>A5U6A7</accession>
<proteinExistence type="inferred from homology"/>
<evidence type="ECO:0000255" key="1">
    <source>
        <dbReference type="HAMAP-Rule" id="MF_01408"/>
    </source>
</evidence>
<evidence type="ECO:0000255" key="2">
    <source>
        <dbReference type="PROSITE-ProRule" id="PRU00661"/>
    </source>
</evidence>